<comment type="catalytic activity">
    <reaction>
        <text>tRNA(Cys) + L-cysteine + ATP = L-cysteinyl-tRNA(Cys) + AMP + diphosphate</text>
        <dbReference type="Rhea" id="RHEA:17773"/>
        <dbReference type="Rhea" id="RHEA-COMP:9661"/>
        <dbReference type="Rhea" id="RHEA-COMP:9679"/>
        <dbReference type="ChEBI" id="CHEBI:30616"/>
        <dbReference type="ChEBI" id="CHEBI:33019"/>
        <dbReference type="ChEBI" id="CHEBI:35235"/>
        <dbReference type="ChEBI" id="CHEBI:78442"/>
        <dbReference type="ChEBI" id="CHEBI:78517"/>
        <dbReference type="ChEBI" id="CHEBI:456215"/>
        <dbReference type="EC" id="6.1.1.16"/>
    </reaction>
</comment>
<comment type="cofactor">
    <cofactor evidence="1">
        <name>Zn(2+)</name>
        <dbReference type="ChEBI" id="CHEBI:29105"/>
    </cofactor>
    <text evidence="1">Binds 1 zinc ion per subunit.</text>
</comment>
<comment type="subunit">
    <text evidence="1">Monomer.</text>
</comment>
<comment type="subcellular location">
    <subcellularLocation>
        <location evidence="1">Cytoplasm</location>
    </subcellularLocation>
</comment>
<comment type="similarity">
    <text evidence="2">Belongs to the class-I aminoacyl-tRNA synthetase family.</text>
</comment>
<reference key="1">
    <citation type="journal article" date="2003" name="Proc. Natl. Acad. Sci. U.S.A.">
        <title>The complete genome sequence of Mycobacterium bovis.</title>
        <authorList>
            <person name="Garnier T."/>
            <person name="Eiglmeier K."/>
            <person name="Camus J.-C."/>
            <person name="Medina N."/>
            <person name="Mansoor H."/>
            <person name="Pryor M."/>
            <person name="Duthoy S."/>
            <person name="Grondin S."/>
            <person name="Lacroix C."/>
            <person name="Monsempe C."/>
            <person name="Simon S."/>
            <person name="Harris B."/>
            <person name="Atkin R."/>
            <person name="Doggett J."/>
            <person name="Mayes R."/>
            <person name="Keating L."/>
            <person name="Wheeler P.R."/>
            <person name="Parkhill J."/>
            <person name="Barrell B.G."/>
            <person name="Cole S.T."/>
            <person name="Gordon S.V."/>
            <person name="Hewinson R.G."/>
        </authorList>
    </citation>
    <scope>NUCLEOTIDE SEQUENCE [LARGE SCALE GENOMIC DNA]</scope>
    <source>
        <strain>ATCC BAA-935 / AF2122/97</strain>
    </source>
</reference>
<reference key="2">
    <citation type="journal article" date="2017" name="Genome Announc.">
        <title>Updated reference genome sequence and annotation of Mycobacterium bovis AF2122/97.</title>
        <authorList>
            <person name="Malone K.M."/>
            <person name="Farrell D."/>
            <person name="Stuber T.P."/>
            <person name="Schubert O.T."/>
            <person name="Aebersold R."/>
            <person name="Robbe-Austerman S."/>
            <person name="Gordon S.V."/>
        </authorList>
    </citation>
    <scope>NUCLEOTIDE SEQUENCE [LARGE SCALE GENOMIC DNA]</scope>
    <scope>GENOME REANNOTATION</scope>
    <source>
        <strain>ATCC BAA-935 / AF2122/97</strain>
    </source>
</reference>
<feature type="chain" id="PRO_0000159435" description="Cysteine--tRNA ligase">
    <location>
        <begin position="1"/>
        <end position="469"/>
    </location>
</feature>
<feature type="short sequence motif" description="'HIGH' region">
    <location>
        <begin position="35"/>
        <end position="45"/>
    </location>
</feature>
<feature type="short sequence motif" description="'KMSKS' region">
    <location>
        <begin position="267"/>
        <end position="271"/>
    </location>
</feature>
<feature type="binding site" evidence="1">
    <location>
        <position position="33"/>
    </location>
    <ligand>
        <name>Zn(2+)</name>
        <dbReference type="ChEBI" id="CHEBI:29105"/>
    </ligand>
</feature>
<feature type="binding site" evidence="1">
    <location>
        <position position="211"/>
    </location>
    <ligand>
        <name>Zn(2+)</name>
        <dbReference type="ChEBI" id="CHEBI:29105"/>
    </ligand>
</feature>
<feature type="binding site" evidence="1">
    <location>
        <position position="236"/>
    </location>
    <ligand>
        <name>Zn(2+)</name>
        <dbReference type="ChEBI" id="CHEBI:29105"/>
    </ligand>
</feature>
<feature type="binding site" evidence="1">
    <location>
        <position position="240"/>
    </location>
    <ligand>
        <name>Zn(2+)</name>
        <dbReference type="ChEBI" id="CHEBI:29105"/>
    </ligand>
</feature>
<feature type="binding site" evidence="1">
    <location>
        <position position="270"/>
    </location>
    <ligand>
        <name>ATP</name>
        <dbReference type="ChEBI" id="CHEBI:30616"/>
    </ligand>
</feature>
<evidence type="ECO:0000250" key="1"/>
<evidence type="ECO:0000305" key="2"/>
<name>SYC_MYCBO</name>
<accession>P0A635</accession>
<accession>A0A1R3Y4N6</accession>
<accession>P96862</accession>
<accession>X2BPV5</accession>
<keyword id="KW-0030">Aminoacyl-tRNA synthetase</keyword>
<keyword id="KW-0067">ATP-binding</keyword>
<keyword id="KW-0963">Cytoplasm</keyword>
<keyword id="KW-0436">Ligase</keyword>
<keyword id="KW-0479">Metal-binding</keyword>
<keyword id="KW-0547">Nucleotide-binding</keyword>
<keyword id="KW-0648">Protein biosynthesis</keyword>
<keyword id="KW-1185">Reference proteome</keyword>
<keyword id="KW-0862">Zinc</keyword>
<protein>
    <recommendedName>
        <fullName>Cysteine--tRNA ligase</fullName>
        <ecNumber>6.1.1.16</ecNumber>
    </recommendedName>
    <alternativeName>
        <fullName>Cysteinyl-tRNA synthetase</fullName>
        <shortName>CysRS</shortName>
    </alternativeName>
</protein>
<sequence length="469" mass="51855">MTDRARLRLHDTAAGVVRDFVPLRPGHVSIYLCGATVQGLPHIGHVRSGVAFDILRRWLLARGYDVAFIRNVTDIEDKILAKAAAAGRPWWEWAATHERAFTAAYDALDVLPPSAEPRATGHITQMIEMIERLIQAGHAYTGGGDVYFDVLSYPEYGQLSGHKIDDVHQGEGVAAGKRDQRDFTLWKGEKPGEPSWPTPWGRGRPGWHLECSAMARSYLGPEFDIHCGGMDLVFPHHENEIAQSRAAGDGFARYWLHNGWVTMGGEKMSKSLGNVLSMPAMLQRVRPAELRYYLGSAHYRSMLEFSETAMQDAVKAYVGLEDFLHRVRTRVGAVCPGDPTPRFAEALDDDLSVPIALAEIHHVRAEGNRALDAGDHDGALRSASAIRAMMGILGCDPLDQRWESRDETSAALAAVDVLVQAELQNREKAREQRNWALADEIRGRLKRAGIEVTDTADGPQWSLLGGDTK</sequence>
<dbReference type="EC" id="6.1.1.16"/>
<dbReference type="EMBL" id="LT708304">
    <property type="protein sequence ID" value="SIU02238.1"/>
    <property type="molecule type" value="Genomic_DNA"/>
</dbReference>
<dbReference type="RefSeq" id="NP_857250.1">
    <property type="nucleotide sequence ID" value="NC_002945.3"/>
</dbReference>
<dbReference type="RefSeq" id="WP_003900108.1">
    <property type="nucleotide sequence ID" value="NC_002945.4"/>
</dbReference>
<dbReference type="SMR" id="P0A635"/>
<dbReference type="GeneID" id="45427568"/>
<dbReference type="KEGG" id="mbo:BQ2027_MB3611C"/>
<dbReference type="PATRIC" id="fig|233413.5.peg.3957"/>
<dbReference type="Proteomes" id="UP000001419">
    <property type="component" value="Chromosome"/>
</dbReference>
<dbReference type="GO" id="GO:0005829">
    <property type="term" value="C:cytosol"/>
    <property type="evidence" value="ECO:0007669"/>
    <property type="project" value="TreeGrafter"/>
</dbReference>
<dbReference type="GO" id="GO:0005524">
    <property type="term" value="F:ATP binding"/>
    <property type="evidence" value="ECO:0007669"/>
    <property type="project" value="UniProtKB-UniRule"/>
</dbReference>
<dbReference type="GO" id="GO:0004817">
    <property type="term" value="F:cysteine-tRNA ligase activity"/>
    <property type="evidence" value="ECO:0007669"/>
    <property type="project" value="UniProtKB-UniRule"/>
</dbReference>
<dbReference type="GO" id="GO:0008270">
    <property type="term" value="F:zinc ion binding"/>
    <property type="evidence" value="ECO:0007669"/>
    <property type="project" value="UniProtKB-UniRule"/>
</dbReference>
<dbReference type="GO" id="GO:0006423">
    <property type="term" value="P:cysteinyl-tRNA aminoacylation"/>
    <property type="evidence" value="ECO:0007669"/>
    <property type="project" value="UniProtKB-UniRule"/>
</dbReference>
<dbReference type="CDD" id="cd00672">
    <property type="entry name" value="CysRS_core"/>
    <property type="match status" value="1"/>
</dbReference>
<dbReference type="FunFam" id="1.20.120.1910:FF:000006">
    <property type="entry name" value="Cysteine--tRNA ligase"/>
    <property type="match status" value="1"/>
</dbReference>
<dbReference type="FunFam" id="3.40.50.620:FF:000068">
    <property type="entry name" value="Cysteine--tRNA ligase"/>
    <property type="match status" value="1"/>
</dbReference>
<dbReference type="Gene3D" id="1.20.120.1910">
    <property type="entry name" value="Cysteine-tRNA ligase, C-terminal anti-codon recognition domain"/>
    <property type="match status" value="1"/>
</dbReference>
<dbReference type="Gene3D" id="3.40.50.620">
    <property type="entry name" value="HUPs"/>
    <property type="match status" value="1"/>
</dbReference>
<dbReference type="HAMAP" id="MF_00041">
    <property type="entry name" value="Cys_tRNA_synth"/>
    <property type="match status" value="1"/>
</dbReference>
<dbReference type="InterPro" id="IPR015803">
    <property type="entry name" value="Cys-tRNA-ligase"/>
</dbReference>
<dbReference type="InterPro" id="IPR015273">
    <property type="entry name" value="Cys-tRNA-synt_Ia_DALR"/>
</dbReference>
<dbReference type="InterPro" id="IPR024909">
    <property type="entry name" value="Cys-tRNA/MSH_ligase"/>
</dbReference>
<dbReference type="InterPro" id="IPR014729">
    <property type="entry name" value="Rossmann-like_a/b/a_fold"/>
</dbReference>
<dbReference type="InterPro" id="IPR032678">
    <property type="entry name" value="tRNA-synt_1_cat_dom"/>
</dbReference>
<dbReference type="InterPro" id="IPR009080">
    <property type="entry name" value="tRNAsynth_Ia_anticodon-bd"/>
</dbReference>
<dbReference type="NCBIfam" id="TIGR00435">
    <property type="entry name" value="cysS"/>
    <property type="match status" value="1"/>
</dbReference>
<dbReference type="PANTHER" id="PTHR10890:SF30">
    <property type="entry name" value="CYSTEINE--TRNA LIGASE"/>
    <property type="match status" value="1"/>
</dbReference>
<dbReference type="PANTHER" id="PTHR10890">
    <property type="entry name" value="CYSTEINYL-TRNA SYNTHETASE"/>
    <property type="match status" value="1"/>
</dbReference>
<dbReference type="Pfam" id="PF09190">
    <property type="entry name" value="DALR_2"/>
    <property type="match status" value="1"/>
</dbReference>
<dbReference type="Pfam" id="PF01406">
    <property type="entry name" value="tRNA-synt_1e"/>
    <property type="match status" value="1"/>
</dbReference>
<dbReference type="PRINTS" id="PR00983">
    <property type="entry name" value="TRNASYNTHCYS"/>
</dbReference>
<dbReference type="SMART" id="SM00840">
    <property type="entry name" value="DALR_2"/>
    <property type="match status" value="1"/>
</dbReference>
<dbReference type="SUPFAM" id="SSF47323">
    <property type="entry name" value="Anticodon-binding domain of a subclass of class I aminoacyl-tRNA synthetases"/>
    <property type="match status" value="1"/>
</dbReference>
<dbReference type="SUPFAM" id="SSF52374">
    <property type="entry name" value="Nucleotidylyl transferase"/>
    <property type="match status" value="1"/>
</dbReference>
<proteinExistence type="inferred from homology"/>
<gene>
    <name type="primary">cysS</name>
    <name type="synonym">cysS1</name>
    <name type="ordered locus">BQ2027_MB3611C</name>
</gene>
<organism>
    <name type="scientific">Mycobacterium bovis (strain ATCC BAA-935 / AF2122/97)</name>
    <dbReference type="NCBI Taxonomy" id="233413"/>
    <lineage>
        <taxon>Bacteria</taxon>
        <taxon>Bacillati</taxon>
        <taxon>Actinomycetota</taxon>
        <taxon>Actinomycetes</taxon>
        <taxon>Mycobacteriales</taxon>
        <taxon>Mycobacteriaceae</taxon>
        <taxon>Mycobacterium</taxon>
        <taxon>Mycobacterium tuberculosis complex</taxon>
    </lineage>
</organism>